<gene>
    <name type="ordered locus">Atu2660</name>
    <name type="ORF">AGR_C_4821</name>
</gene>
<organism>
    <name type="scientific">Agrobacterium fabrum (strain C58 / ATCC 33970)</name>
    <name type="common">Agrobacterium tumefaciens (strain C58)</name>
    <dbReference type="NCBI Taxonomy" id="176299"/>
    <lineage>
        <taxon>Bacteria</taxon>
        <taxon>Pseudomonadati</taxon>
        <taxon>Pseudomonadota</taxon>
        <taxon>Alphaproteobacteria</taxon>
        <taxon>Hyphomicrobiales</taxon>
        <taxon>Rhizobiaceae</taxon>
        <taxon>Rhizobium/Agrobacterium group</taxon>
        <taxon>Agrobacterium</taxon>
        <taxon>Agrobacterium tumefaciens complex</taxon>
    </lineage>
</organism>
<dbReference type="EMBL" id="AE007869">
    <property type="protein sequence ID" value="AAL43641.1"/>
    <property type="status" value="ALT_INIT"/>
    <property type="molecule type" value="Genomic_DNA"/>
</dbReference>
<dbReference type="PIR" id="AC2903">
    <property type="entry name" value="AC2903"/>
</dbReference>
<dbReference type="PIR" id="E97678">
    <property type="entry name" value="E97678"/>
</dbReference>
<dbReference type="RefSeq" id="NP_530540.1">
    <property type="nucleotide sequence ID" value="NC_003062.2"/>
</dbReference>
<dbReference type="SMR" id="Q8UC38"/>
<dbReference type="EnsemblBacteria" id="AAL43641">
    <property type="protein sequence ID" value="AAL43641"/>
    <property type="gene ID" value="Atu2660"/>
</dbReference>
<dbReference type="KEGG" id="atu:Atu2660"/>
<dbReference type="PATRIC" id="fig|176299.10.peg.2667"/>
<dbReference type="eggNOG" id="COG1872">
    <property type="taxonomic scope" value="Bacteria"/>
</dbReference>
<dbReference type="HOGENOM" id="CLU_1472261_0_0_5"/>
<dbReference type="OrthoDB" id="9801972at2"/>
<dbReference type="Proteomes" id="UP000000813">
    <property type="component" value="Chromosome circular"/>
</dbReference>
<dbReference type="GO" id="GO:0005737">
    <property type="term" value="C:cytoplasm"/>
    <property type="evidence" value="ECO:0007669"/>
    <property type="project" value="TreeGrafter"/>
</dbReference>
<dbReference type="Gene3D" id="3.30.1200.10">
    <property type="entry name" value="YggU-like"/>
    <property type="match status" value="1"/>
</dbReference>
<dbReference type="HAMAP" id="MF_00634">
    <property type="entry name" value="UPF0235"/>
    <property type="match status" value="1"/>
</dbReference>
<dbReference type="InterPro" id="IPR003746">
    <property type="entry name" value="DUF167"/>
</dbReference>
<dbReference type="InterPro" id="IPR036591">
    <property type="entry name" value="YggU-like_sf"/>
</dbReference>
<dbReference type="NCBIfam" id="TIGR00251">
    <property type="entry name" value="DUF167 family protein"/>
    <property type="match status" value="1"/>
</dbReference>
<dbReference type="NCBIfam" id="NF002348">
    <property type="entry name" value="PRK01310.1"/>
    <property type="match status" value="1"/>
</dbReference>
<dbReference type="PANTHER" id="PTHR13420">
    <property type="entry name" value="UPF0235 PROTEIN C15ORF40"/>
    <property type="match status" value="1"/>
</dbReference>
<dbReference type="PANTHER" id="PTHR13420:SF7">
    <property type="entry name" value="UPF0235 PROTEIN C15ORF40"/>
    <property type="match status" value="1"/>
</dbReference>
<dbReference type="Pfam" id="PF02594">
    <property type="entry name" value="DUF167"/>
    <property type="match status" value="1"/>
</dbReference>
<dbReference type="SMART" id="SM01152">
    <property type="entry name" value="DUF167"/>
    <property type="match status" value="1"/>
</dbReference>
<dbReference type="SUPFAM" id="SSF69786">
    <property type="entry name" value="YggU-like"/>
    <property type="match status" value="1"/>
</dbReference>
<name>Y2660_AGRFC</name>
<protein>
    <recommendedName>
        <fullName>UPF0235 protein Atu2660</fullName>
    </recommendedName>
</protein>
<keyword id="KW-1185">Reference proteome</keyword>
<comment type="similarity">
    <text evidence="1">Belongs to the UPF0235 family.</text>
</comment>
<comment type="sequence caution" evidence="1">
    <conflict type="erroneous initiation">
        <sequence resource="EMBL-CDS" id="AAL43641"/>
    </conflict>
</comment>
<evidence type="ECO:0000305" key="1"/>
<sequence>MEHALPDDCLSGLWRKHDDHVRLSVRLTPNGGRDAIDGVEQDADGNAHLKARVSAVPEGGKANKALIVLLAKKLGLPKSSITFISGETARKKILRIDTDPEDFEKLFKKLAG</sequence>
<proteinExistence type="inferred from homology"/>
<feature type="chain" id="PRO_0000139433" description="UPF0235 protein Atu2660">
    <location>
        <begin position="1"/>
        <end position="112"/>
    </location>
</feature>
<accession>Q8UC38</accession>
<reference key="1">
    <citation type="journal article" date="2001" name="Science">
        <title>The genome of the natural genetic engineer Agrobacterium tumefaciens C58.</title>
        <authorList>
            <person name="Wood D.W."/>
            <person name="Setubal J.C."/>
            <person name="Kaul R."/>
            <person name="Monks D.E."/>
            <person name="Kitajima J.P."/>
            <person name="Okura V.K."/>
            <person name="Zhou Y."/>
            <person name="Chen L."/>
            <person name="Wood G.E."/>
            <person name="Almeida N.F. Jr."/>
            <person name="Woo L."/>
            <person name="Chen Y."/>
            <person name="Paulsen I.T."/>
            <person name="Eisen J.A."/>
            <person name="Karp P.D."/>
            <person name="Bovee D. Sr."/>
            <person name="Chapman P."/>
            <person name="Clendenning J."/>
            <person name="Deatherage G."/>
            <person name="Gillet W."/>
            <person name="Grant C."/>
            <person name="Kutyavin T."/>
            <person name="Levy R."/>
            <person name="Li M.-J."/>
            <person name="McClelland E."/>
            <person name="Palmieri A."/>
            <person name="Raymond C."/>
            <person name="Rouse G."/>
            <person name="Saenphimmachak C."/>
            <person name="Wu Z."/>
            <person name="Romero P."/>
            <person name="Gordon D."/>
            <person name="Zhang S."/>
            <person name="Yoo H."/>
            <person name="Tao Y."/>
            <person name="Biddle P."/>
            <person name="Jung M."/>
            <person name="Krespan W."/>
            <person name="Perry M."/>
            <person name="Gordon-Kamm B."/>
            <person name="Liao L."/>
            <person name="Kim S."/>
            <person name="Hendrick C."/>
            <person name="Zhao Z.-Y."/>
            <person name="Dolan M."/>
            <person name="Chumley F."/>
            <person name="Tingey S.V."/>
            <person name="Tomb J.-F."/>
            <person name="Gordon M.P."/>
            <person name="Olson M.V."/>
            <person name="Nester E.W."/>
        </authorList>
    </citation>
    <scope>NUCLEOTIDE SEQUENCE [LARGE SCALE GENOMIC DNA]</scope>
    <source>
        <strain>C58 / ATCC 33970</strain>
    </source>
</reference>
<reference key="2">
    <citation type="journal article" date="2001" name="Science">
        <title>Genome sequence of the plant pathogen and biotechnology agent Agrobacterium tumefaciens C58.</title>
        <authorList>
            <person name="Goodner B."/>
            <person name="Hinkle G."/>
            <person name="Gattung S."/>
            <person name="Miller N."/>
            <person name="Blanchard M."/>
            <person name="Qurollo B."/>
            <person name="Goldman B.S."/>
            <person name="Cao Y."/>
            <person name="Askenazi M."/>
            <person name="Halling C."/>
            <person name="Mullin L."/>
            <person name="Houmiel K."/>
            <person name="Gordon J."/>
            <person name="Vaudin M."/>
            <person name="Iartchouk O."/>
            <person name="Epp A."/>
            <person name="Liu F."/>
            <person name="Wollam C."/>
            <person name="Allinger M."/>
            <person name="Doughty D."/>
            <person name="Scott C."/>
            <person name="Lappas C."/>
            <person name="Markelz B."/>
            <person name="Flanagan C."/>
            <person name="Crowell C."/>
            <person name="Gurson J."/>
            <person name="Lomo C."/>
            <person name="Sear C."/>
            <person name="Strub G."/>
            <person name="Cielo C."/>
            <person name="Slater S."/>
        </authorList>
    </citation>
    <scope>NUCLEOTIDE SEQUENCE [LARGE SCALE GENOMIC DNA]</scope>
    <source>
        <strain>C58 / ATCC 33970</strain>
    </source>
</reference>